<reference key="1">
    <citation type="journal article" date="2007" name="PLoS ONE">
        <title>Analysis of the neurotoxin complex genes in Clostridium botulinum A1-A4 and B1 strains: BoNT/A3, /Ba4 and /B1 clusters are located within plasmids.</title>
        <authorList>
            <person name="Smith T.J."/>
            <person name="Hill K.K."/>
            <person name="Foley B.T."/>
            <person name="Detter J.C."/>
            <person name="Munk A.C."/>
            <person name="Bruce D.C."/>
            <person name="Doggett N.A."/>
            <person name="Smith L.A."/>
            <person name="Marks J.D."/>
            <person name="Xie G."/>
            <person name="Brettin T.S."/>
        </authorList>
    </citation>
    <scope>NUCLEOTIDE SEQUENCE [LARGE SCALE GENOMIC DNA]</scope>
    <source>
        <strain>Okra / Type B1</strain>
    </source>
</reference>
<proteinExistence type="inferred from homology"/>
<accession>B1II81</accession>
<sequence>MEEIVEMSLLLDFYGSLLTEKQNKIMDLYYNNDYSLKEISELTNTSRQAVHDIVKRCHKALLQYEEKLHMMERFINLENSKEKLLNMLNKVTKENIKEIDHIKKYIIDNI</sequence>
<dbReference type="EMBL" id="CP000939">
    <property type="protein sequence ID" value="ACA44246.1"/>
    <property type="molecule type" value="Genomic_DNA"/>
</dbReference>
<dbReference type="RefSeq" id="WP_003393779.1">
    <property type="nucleotide sequence ID" value="NC_010516.1"/>
</dbReference>
<dbReference type="SMR" id="B1II81"/>
<dbReference type="KEGG" id="cbb:CLD_2190"/>
<dbReference type="HOGENOM" id="CLU_129218_0_1_9"/>
<dbReference type="Proteomes" id="UP000008541">
    <property type="component" value="Chromosome"/>
</dbReference>
<dbReference type="Gene3D" id="1.10.10.10">
    <property type="entry name" value="Winged helix-like DNA-binding domain superfamily/Winged helix DNA-binding domain"/>
    <property type="match status" value="1"/>
</dbReference>
<dbReference type="HAMAP" id="MF_00245">
    <property type="entry name" value="UPF0122"/>
    <property type="match status" value="1"/>
</dbReference>
<dbReference type="InterPro" id="IPR013324">
    <property type="entry name" value="RNA_pol_sigma_r3/r4-like"/>
</dbReference>
<dbReference type="InterPro" id="IPR007394">
    <property type="entry name" value="UPF0122"/>
</dbReference>
<dbReference type="InterPro" id="IPR054831">
    <property type="entry name" value="UPF0122_fam_protein"/>
</dbReference>
<dbReference type="InterPro" id="IPR036388">
    <property type="entry name" value="WH-like_DNA-bd_sf"/>
</dbReference>
<dbReference type="NCBIfam" id="NF001072">
    <property type="entry name" value="PRK00118.2-2"/>
    <property type="match status" value="1"/>
</dbReference>
<dbReference type="NCBIfam" id="NF001074">
    <property type="entry name" value="PRK00118.2-4"/>
    <property type="match status" value="1"/>
</dbReference>
<dbReference type="NCBIfam" id="NF045758">
    <property type="entry name" value="YlxM"/>
    <property type="match status" value="1"/>
</dbReference>
<dbReference type="PANTHER" id="PTHR40083">
    <property type="entry name" value="UPF0122 PROTEIN CBO2450/CLC_2298"/>
    <property type="match status" value="1"/>
</dbReference>
<dbReference type="PANTHER" id="PTHR40083:SF1">
    <property type="entry name" value="UPF0122 PROTEIN YLXM"/>
    <property type="match status" value="1"/>
</dbReference>
<dbReference type="Pfam" id="PF04297">
    <property type="entry name" value="UPF0122"/>
    <property type="match status" value="1"/>
</dbReference>
<dbReference type="SUPFAM" id="SSF88659">
    <property type="entry name" value="Sigma3 and sigma4 domains of RNA polymerase sigma factors"/>
    <property type="match status" value="1"/>
</dbReference>
<comment type="function">
    <text evidence="1">Might take part in the signal recognition particle (SRP) pathway. This is inferred from the conservation of its genetic proximity to ftsY/ffh. May be a regulatory protein.</text>
</comment>
<comment type="similarity">
    <text evidence="1">Belongs to the UPF0122 family.</text>
</comment>
<name>Y2190_CLOBK</name>
<feature type="chain" id="PRO_1000100810" description="UPF0122 protein CLD_2190">
    <location>
        <begin position="1"/>
        <end position="110"/>
    </location>
</feature>
<gene>
    <name type="ordered locus">CLD_2190</name>
</gene>
<organism>
    <name type="scientific">Clostridium botulinum (strain Okra / Type B1)</name>
    <dbReference type="NCBI Taxonomy" id="498213"/>
    <lineage>
        <taxon>Bacteria</taxon>
        <taxon>Bacillati</taxon>
        <taxon>Bacillota</taxon>
        <taxon>Clostridia</taxon>
        <taxon>Eubacteriales</taxon>
        <taxon>Clostridiaceae</taxon>
        <taxon>Clostridium</taxon>
    </lineage>
</organism>
<evidence type="ECO:0000255" key="1">
    <source>
        <dbReference type="HAMAP-Rule" id="MF_00245"/>
    </source>
</evidence>
<protein>
    <recommendedName>
        <fullName evidence="1">UPF0122 protein CLD_2190</fullName>
    </recommendedName>
</protein>